<feature type="chain" id="PRO_1000093159" description="Glutamyl-tRNA reductase">
    <location>
        <begin position="1"/>
        <end position="420"/>
    </location>
</feature>
<feature type="active site" description="Nucleophile" evidence="1">
    <location>
        <position position="50"/>
    </location>
</feature>
<feature type="binding site" evidence="1">
    <location>
        <begin position="49"/>
        <end position="52"/>
    </location>
    <ligand>
        <name>substrate</name>
    </ligand>
</feature>
<feature type="binding site" evidence="1">
    <location>
        <position position="109"/>
    </location>
    <ligand>
        <name>substrate</name>
    </ligand>
</feature>
<feature type="binding site" evidence="1">
    <location>
        <begin position="114"/>
        <end position="116"/>
    </location>
    <ligand>
        <name>substrate</name>
    </ligand>
</feature>
<feature type="binding site" evidence="1">
    <location>
        <position position="120"/>
    </location>
    <ligand>
        <name>substrate</name>
    </ligand>
</feature>
<feature type="binding site" evidence="1">
    <location>
        <begin position="189"/>
        <end position="194"/>
    </location>
    <ligand>
        <name>NADP(+)</name>
        <dbReference type="ChEBI" id="CHEBI:58349"/>
    </ligand>
</feature>
<feature type="site" description="Important for activity" evidence="1">
    <location>
        <position position="99"/>
    </location>
</feature>
<dbReference type="EC" id="1.2.1.70" evidence="1"/>
<dbReference type="EMBL" id="AM942759">
    <property type="protein sequence ID" value="CAR42343.1"/>
    <property type="molecule type" value="Genomic_DNA"/>
</dbReference>
<dbReference type="RefSeq" id="WP_004242677.1">
    <property type="nucleotide sequence ID" value="NC_010554.1"/>
</dbReference>
<dbReference type="SMR" id="B4EVR6"/>
<dbReference type="EnsemblBacteria" id="CAR42343">
    <property type="protein sequence ID" value="CAR42343"/>
    <property type="gene ID" value="PMI1086"/>
</dbReference>
<dbReference type="GeneID" id="6801355"/>
<dbReference type="KEGG" id="pmr:PMI1086"/>
<dbReference type="eggNOG" id="COG0373">
    <property type="taxonomic scope" value="Bacteria"/>
</dbReference>
<dbReference type="HOGENOM" id="CLU_035113_2_2_6"/>
<dbReference type="UniPathway" id="UPA00251">
    <property type="reaction ID" value="UER00316"/>
</dbReference>
<dbReference type="Proteomes" id="UP000008319">
    <property type="component" value="Chromosome"/>
</dbReference>
<dbReference type="GO" id="GO:0008883">
    <property type="term" value="F:glutamyl-tRNA reductase activity"/>
    <property type="evidence" value="ECO:0007669"/>
    <property type="project" value="UniProtKB-UniRule"/>
</dbReference>
<dbReference type="GO" id="GO:0050661">
    <property type="term" value="F:NADP binding"/>
    <property type="evidence" value="ECO:0007669"/>
    <property type="project" value="InterPro"/>
</dbReference>
<dbReference type="GO" id="GO:0019353">
    <property type="term" value="P:protoporphyrinogen IX biosynthetic process from glutamate"/>
    <property type="evidence" value="ECO:0007669"/>
    <property type="project" value="TreeGrafter"/>
</dbReference>
<dbReference type="CDD" id="cd05213">
    <property type="entry name" value="NAD_bind_Glutamyl_tRNA_reduct"/>
    <property type="match status" value="1"/>
</dbReference>
<dbReference type="FunFam" id="3.30.460.30:FF:000001">
    <property type="entry name" value="Glutamyl-tRNA reductase"/>
    <property type="match status" value="1"/>
</dbReference>
<dbReference type="FunFam" id="3.40.50.720:FF:000031">
    <property type="entry name" value="Glutamyl-tRNA reductase"/>
    <property type="match status" value="1"/>
</dbReference>
<dbReference type="Gene3D" id="3.30.460.30">
    <property type="entry name" value="Glutamyl-tRNA reductase, N-terminal domain"/>
    <property type="match status" value="1"/>
</dbReference>
<dbReference type="Gene3D" id="3.40.50.720">
    <property type="entry name" value="NAD(P)-binding Rossmann-like Domain"/>
    <property type="match status" value="1"/>
</dbReference>
<dbReference type="HAMAP" id="MF_00087">
    <property type="entry name" value="Glu_tRNA_reductase"/>
    <property type="match status" value="1"/>
</dbReference>
<dbReference type="InterPro" id="IPR000343">
    <property type="entry name" value="4pyrrol_synth_GluRdtase"/>
</dbReference>
<dbReference type="InterPro" id="IPR015896">
    <property type="entry name" value="4pyrrol_synth_GluRdtase_dimer"/>
</dbReference>
<dbReference type="InterPro" id="IPR015895">
    <property type="entry name" value="4pyrrol_synth_GluRdtase_N"/>
</dbReference>
<dbReference type="InterPro" id="IPR018214">
    <property type="entry name" value="GluRdtase_CS"/>
</dbReference>
<dbReference type="InterPro" id="IPR036453">
    <property type="entry name" value="GluRdtase_dimer_dom_sf"/>
</dbReference>
<dbReference type="InterPro" id="IPR036343">
    <property type="entry name" value="GluRdtase_N_sf"/>
</dbReference>
<dbReference type="InterPro" id="IPR036291">
    <property type="entry name" value="NAD(P)-bd_dom_sf"/>
</dbReference>
<dbReference type="InterPro" id="IPR006151">
    <property type="entry name" value="Shikm_DH/Glu-tRNA_Rdtase"/>
</dbReference>
<dbReference type="NCBIfam" id="TIGR01035">
    <property type="entry name" value="hemA"/>
    <property type="match status" value="1"/>
</dbReference>
<dbReference type="PANTHER" id="PTHR43013">
    <property type="entry name" value="GLUTAMYL-TRNA REDUCTASE"/>
    <property type="match status" value="1"/>
</dbReference>
<dbReference type="PANTHER" id="PTHR43013:SF1">
    <property type="entry name" value="GLUTAMYL-TRNA REDUCTASE"/>
    <property type="match status" value="1"/>
</dbReference>
<dbReference type="Pfam" id="PF00745">
    <property type="entry name" value="GlutR_dimer"/>
    <property type="match status" value="1"/>
</dbReference>
<dbReference type="Pfam" id="PF05201">
    <property type="entry name" value="GlutR_N"/>
    <property type="match status" value="1"/>
</dbReference>
<dbReference type="Pfam" id="PF01488">
    <property type="entry name" value="Shikimate_DH"/>
    <property type="match status" value="1"/>
</dbReference>
<dbReference type="PIRSF" id="PIRSF000445">
    <property type="entry name" value="4pyrrol_synth_GluRdtase"/>
    <property type="match status" value="1"/>
</dbReference>
<dbReference type="SUPFAM" id="SSF69742">
    <property type="entry name" value="Glutamyl tRNA-reductase catalytic, N-terminal domain"/>
    <property type="match status" value="1"/>
</dbReference>
<dbReference type="SUPFAM" id="SSF69075">
    <property type="entry name" value="Glutamyl tRNA-reductase dimerization domain"/>
    <property type="match status" value="1"/>
</dbReference>
<dbReference type="SUPFAM" id="SSF51735">
    <property type="entry name" value="NAD(P)-binding Rossmann-fold domains"/>
    <property type="match status" value="1"/>
</dbReference>
<dbReference type="PROSITE" id="PS00747">
    <property type="entry name" value="GLUTR"/>
    <property type="match status" value="1"/>
</dbReference>
<accession>B4EVR6</accession>
<evidence type="ECO:0000255" key="1">
    <source>
        <dbReference type="HAMAP-Rule" id="MF_00087"/>
    </source>
</evidence>
<comment type="function">
    <text evidence="1">Catalyzes the NADPH-dependent reduction of glutamyl-tRNA(Glu) to glutamate 1-semialdehyde (GSA).</text>
</comment>
<comment type="catalytic activity">
    <reaction evidence="1">
        <text>(S)-4-amino-5-oxopentanoate + tRNA(Glu) + NADP(+) = L-glutamyl-tRNA(Glu) + NADPH + H(+)</text>
        <dbReference type="Rhea" id="RHEA:12344"/>
        <dbReference type="Rhea" id="RHEA-COMP:9663"/>
        <dbReference type="Rhea" id="RHEA-COMP:9680"/>
        <dbReference type="ChEBI" id="CHEBI:15378"/>
        <dbReference type="ChEBI" id="CHEBI:57501"/>
        <dbReference type="ChEBI" id="CHEBI:57783"/>
        <dbReference type="ChEBI" id="CHEBI:58349"/>
        <dbReference type="ChEBI" id="CHEBI:78442"/>
        <dbReference type="ChEBI" id="CHEBI:78520"/>
        <dbReference type="EC" id="1.2.1.70"/>
    </reaction>
</comment>
<comment type="pathway">
    <text evidence="1">Porphyrin-containing compound metabolism; protoporphyrin-IX biosynthesis; 5-aminolevulinate from L-glutamyl-tRNA(Glu): step 1/2.</text>
</comment>
<comment type="subunit">
    <text evidence="1">Homodimer.</text>
</comment>
<comment type="domain">
    <text evidence="1">Possesses an unusual extended V-shaped dimeric structure with each monomer consisting of three distinct domains arranged along a curved 'spinal' alpha-helix. The N-terminal catalytic domain specifically recognizes the glutamate moiety of the substrate. The second domain is the NADPH-binding domain, and the third C-terminal domain is responsible for dimerization.</text>
</comment>
<comment type="miscellaneous">
    <text evidence="1">During catalysis, the active site Cys acts as a nucleophile attacking the alpha-carbonyl group of tRNA-bound glutamate with the formation of a thioester intermediate between enzyme and glutamate, and the concomitant release of tRNA(Glu). The thioester intermediate is finally reduced by direct hydride transfer from NADPH, to form the product GSA.</text>
</comment>
<comment type="similarity">
    <text evidence="1">Belongs to the glutamyl-tRNA reductase family.</text>
</comment>
<protein>
    <recommendedName>
        <fullName evidence="1">Glutamyl-tRNA reductase</fullName>
        <shortName evidence="1">GluTR</shortName>
        <ecNumber evidence="1">1.2.1.70</ecNumber>
    </recommendedName>
</protein>
<keyword id="KW-0521">NADP</keyword>
<keyword id="KW-0560">Oxidoreductase</keyword>
<keyword id="KW-0627">Porphyrin biosynthesis</keyword>
<keyword id="KW-1185">Reference proteome</keyword>
<name>HEM1_PROMH</name>
<proteinExistence type="inferred from homology"/>
<reference key="1">
    <citation type="journal article" date="2008" name="J. Bacteriol.">
        <title>Complete genome sequence of uropathogenic Proteus mirabilis, a master of both adherence and motility.</title>
        <authorList>
            <person name="Pearson M.M."/>
            <person name="Sebaihia M."/>
            <person name="Churcher C."/>
            <person name="Quail M.A."/>
            <person name="Seshasayee A.S."/>
            <person name="Luscombe N.M."/>
            <person name="Abdellah Z."/>
            <person name="Arrosmith C."/>
            <person name="Atkin B."/>
            <person name="Chillingworth T."/>
            <person name="Hauser H."/>
            <person name="Jagels K."/>
            <person name="Moule S."/>
            <person name="Mungall K."/>
            <person name="Norbertczak H."/>
            <person name="Rabbinowitsch E."/>
            <person name="Walker D."/>
            <person name="Whithead S."/>
            <person name="Thomson N.R."/>
            <person name="Rather P.N."/>
            <person name="Parkhill J."/>
            <person name="Mobley H.L.T."/>
        </authorList>
    </citation>
    <scope>NUCLEOTIDE SEQUENCE [LARGE SCALE GENOMIC DNA]</scope>
    <source>
        <strain>HI4320</strain>
    </source>
</reference>
<sequence length="420" mass="46819">MTLLALGINHKTAPVALREKVSFSPDTMGDALNNLLQQPAVRGGVVLSTCNRTELYLSLEDKENSHEQLISWLCQYHQIEPHELKNSVYWHQDNQAVSHLMRVASGLDSLVLGEPQILGQVKKAFADSQNYHSLSSELERLFQKSFSVAKRVRTETQIGANAVSVAFAACTLARQIFESLSSLTILLVGAGETIELVARHLREHQVKKIIIANRTKERAQRLANEVDAEVITLSDIDESLSQADIVISSTASPLPIIGKGMVERALKKRRNQPMLLVDIAVPRDIEQDIEKLSNVYLYSVDDLEAIIQHNREQRQAAAIEAEHIVQQESGQFMDWLRAQGAVGAIREYRDSAEMLRAEMAEKAIALIQNGADAEKVIQQLSHQLMNRLIHTPTKSLQQAASDGDIERLNLLRESLGITHN</sequence>
<gene>
    <name evidence="1" type="primary">hemA</name>
    <name type="ordered locus">PMI1086</name>
</gene>
<organism>
    <name type="scientific">Proteus mirabilis (strain HI4320)</name>
    <dbReference type="NCBI Taxonomy" id="529507"/>
    <lineage>
        <taxon>Bacteria</taxon>
        <taxon>Pseudomonadati</taxon>
        <taxon>Pseudomonadota</taxon>
        <taxon>Gammaproteobacteria</taxon>
        <taxon>Enterobacterales</taxon>
        <taxon>Morganellaceae</taxon>
        <taxon>Proteus</taxon>
    </lineage>
</organism>